<protein>
    <recommendedName>
        <fullName>E3 ubiquitin-protein ligase MGRN1</fullName>
        <ecNumber>2.3.2.27</ecNumber>
    </recommendedName>
    <alternativeName>
        <fullName>Mahogunin RING finger protein 1</fullName>
    </alternativeName>
    <alternativeName>
        <fullName evidence="16">RING-type E3 ubiquitin transferase MGRN1</fullName>
    </alternativeName>
</protein>
<comment type="function">
    <text evidence="1 6 12 13">E3 ubiquitin-protein ligase. Mediates TSG101 monoubiquitination at multiple sites. Plays a role in the regulation of endosome-to-lysosome trafficking. Impairs MC1R- and MC4R-signaling by competing with GNAS-binding to MCRs and inhibiting agonist-induced cAMP production. Does not inhibit ADRB2-signaling. Does not promote MC1R ubiquitination (By similarity). Also acts as a negative regulator of hedgehog signaling (PubMed:29290584).</text>
</comment>
<comment type="catalytic activity">
    <reaction>
        <text>S-ubiquitinyl-[E2 ubiquitin-conjugating enzyme]-L-cysteine + [acceptor protein]-L-lysine = [E2 ubiquitin-conjugating enzyme]-L-cysteine + N(6)-ubiquitinyl-[acceptor protein]-L-lysine.</text>
        <dbReference type="EC" id="2.3.2.27"/>
    </reaction>
</comment>
<comment type="pathway">
    <text>Protein modification; protein ubiquitination.</text>
</comment>
<comment type="subunit">
    <text evidence="1 11 12">Interacts with MC1R and MC4R (By similarity). Interacts with TSG101. Interacts with mislocalized cytosolically exposed PRNP; this interaction alters MGRN1 subcellular location and causes lysosomal enlargement.</text>
</comment>
<comment type="subcellular location">
    <subcellularLocation>
        <location evidence="10 11">Early endosome</location>
    </subcellularLocation>
    <text evidence="1">The endosomal localization is dependent on the interaction with TSG101.</text>
</comment>
<comment type="subcellular location">
    <molecule>Isoform 1</molecule>
    <subcellularLocation>
        <location>Cytoplasm</location>
    </subcellularLocation>
    <subcellularLocation>
        <location evidence="1">Cell membrane</location>
    </subcellularLocation>
</comment>
<comment type="subcellular location">
    <molecule>Isoform 5</molecule>
    <subcellularLocation>
        <location>Cytoplasm</location>
    </subcellularLocation>
    <subcellularLocation>
        <location>Nucleus</location>
    </subcellularLocation>
    <text>In the cytoplasm, predominantly localized to the perinuclear region and discrete vesicular structures. In the nucleus, broadly distributed, but excluded from nucleoli.</text>
</comment>
<comment type="alternative products">
    <event type="alternative splicing"/>
    <isoform>
        <id>Q9D074-1</id>
        <name>1</name>
        <name>I</name>
        <sequence type="displayed"/>
    </isoform>
    <isoform>
        <id>Q9D074-2</id>
        <name>2</name>
        <sequence type="described" ref="VSP_019854"/>
    </isoform>
    <isoform>
        <id>Q9D074-3</id>
        <name>3</name>
        <name>III</name>
        <sequence type="described" ref="VSP_019856"/>
    </isoform>
    <isoform>
        <id>Q9D074-4</id>
        <name>4</name>
        <name>II</name>
        <sequence type="described" ref="VSP_019855"/>
    </isoform>
    <isoform>
        <id>Q9D074-5</id>
        <name>5</name>
        <name>IV</name>
        <sequence type="described" ref="VSP_019855 VSP_019856"/>
    </isoform>
</comment>
<comment type="tissue specificity">
    <text evidence="5 6 8 11">Widely expressed, with highest levels in brain, heart, kidney and liver. In the CNS, especially prominent in the Purkinje cells of the cerebellum. In the skin, expressed in the basal layer of the epidermis and hair follicles, primarily in the outer root sheath. Isoforms 1, 3, 4 and 5 are equally expressed in the liver. Isoforms 1, 3 and 4 are most abundant in brain, kidney and heart, respectively.</text>
</comment>
<comment type="developmental stage">
    <text evidence="7">In presomite and early somite stage embryos, most strongly expressed in the node and more weakly in the neuroepithelium. In 6- to 12-somite embryos, strongest expression in the node, symmetrically in the floor plate of the neural tube and in the developing heart; weaker expression in paraxial mesoderm, somites, neuroepithelium, as well as in hind- and foregut pockets. By 9.5 dpc, virtually ubiquitous.</text>
</comment>
<comment type="domain">
    <text>The RING finger is required for ubiquitin ligase activity.</text>
</comment>
<comment type="PTM">
    <text evidence="6">Autoubiquitinated in vitro.</text>
</comment>
<comment type="disruption phenotype">
    <text evidence="6 7 9 10 12">Mutant mice have a pleiotropic phenotype that includes the absence of yellow hair pigment, curly hair and whiskers, abnormal craniofacial patterning, reduced embryonic viability due to mispatterning of the left-right body axis and age-dependent spongiform neurodegeneration. Many months before onset of vacuolation, mitochondrial complex IV expression and activity is significantly reduced in mutant brains and oxidative stress is increased. A global reduction of ubiquitinated proteins in the brain is observed. At 1 month of age, null mutant mouse brains have less ubiquitinated TSG101, while adult mutant brains contain more ubiquitinated and insoluble TSG101 than wild type. At 1 month of age, significant increase in EGFR levels in the brains of null mutant mice relative to wild-type mice, suggesting an impaired trafficking to the lysosome for degradation.</text>
</comment>
<comment type="miscellaneous">
    <molecule>Isoform 1</molecule>
    <text>Sufficient for normal development, pigmentation and neuronal integrity.</text>
</comment>
<comment type="miscellaneous">
    <molecule>Isoform 3</molecule>
    <text evidence="16">Sufficient for normal development, pigmentation and neuronal integrity.</text>
</comment>
<comment type="miscellaneous">
    <molecule>Isoform 4</molecule>
    <text evidence="16">Partial rescue of the phenotype of mutant null mice.</text>
</comment>
<comment type="miscellaneous">
    <molecule>Isoform 5</molecule>
    <text evidence="16">Unable to rescue the phenotype of mutant null mice. This sequence has been deduced from the description in PubMed:19422019.</text>
</comment>
<feature type="initiator methionine" description="Removed" evidence="2">
    <location>
        <position position="1"/>
    </location>
</feature>
<feature type="chain" id="PRO_0000246688" description="E3 ubiquitin-protein ligase MGRN1">
    <location>
        <begin position="2"/>
        <end position="532"/>
    </location>
</feature>
<feature type="zinc finger region" description="RING-type" evidence="3">
    <location>
        <begin position="277"/>
        <end position="316"/>
    </location>
</feature>
<feature type="region of interest" description="Disordered" evidence="4">
    <location>
        <begin position="419"/>
        <end position="518"/>
    </location>
</feature>
<feature type="short sequence motif" description="Required for TSG101-binding">
    <location>
        <begin position="384"/>
        <end position="387"/>
    </location>
</feature>
<feature type="compositionally biased region" description="Polar residues" evidence="4">
    <location>
        <begin position="422"/>
        <end position="435"/>
    </location>
</feature>
<feature type="compositionally biased region" description="Acidic residues" evidence="4">
    <location>
        <begin position="442"/>
        <end position="453"/>
    </location>
</feature>
<feature type="modified residue" description="Phosphotyrosine" evidence="17">
    <location>
        <position position="389"/>
    </location>
</feature>
<feature type="modified residue" description="Phosphoserine" evidence="18 19">
    <location>
        <position position="428"/>
    </location>
</feature>
<feature type="modified residue" description="Phosphoserine" evidence="19">
    <location>
        <position position="449"/>
    </location>
</feature>
<feature type="modified residue" description="Phosphoserine" evidence="19">
    <location>
        <position position="452"/>
    </location>
</feature>
<feature type="modified residue" description="Phosphoserine" evidence="2">
    <location>
        <position position="501"/>
    </location>
</feature>
<feature type="lipid moiety-binding region" description="N-myristoyl glycine" evidence="1">
    <location>
        <position position="2"/>
    </location>
</feature>
<feature type="splice variant" id="VSP_019854" description="In isoform 2." evidence="15">
    <original>S</original>
    <variation>SA</variation>
    <location>
        <position position="29"/>
    </location>
</feature>
<feature type="splice variant" id="VSP_019855" description="In isoform 4 and isoform 5." evidence="15">
    <original>S</original>
    <variation>SCPFKKSKSHPASLASKKPKRET</variation>
    <location>
        <position position="355"/>
    </location>
</feature>
<feature type="splice variant" id="VSP_019856" description="In isoform 3 and isoform 5." evidence="14">
    <original>ALGPESCSVGIEE</original>
    <variation>GWSTSMETPHSLGTTSSPWPLLSGSSPEPGVAELTPF</variation>
    <location>
        <begin position="520"/>
        <end position="532"/>
    </location>
</feature>
<feature type="mutagenesis site" description="Loss of ubiquitin-protein ligase activity. Increase in TSG101-binding." evidence="12">
    <original>CVVC</original>
    <variation>AVVA</variation>
    <location>
        <begin position="278"/>
        <end position="281"/>
    </location>
</feature>
<feature type="mutagenesis site" description="Loss of TSG101-binding." evidence="12">
    <original>PSAP</original>
    <variation>ASAA</variation>
    <location>
        <begin position="384"/>
        <end position="387"/>
    </location>
</feature>
<feature type="sequence conflict" description="In Ref. 1; BAE29360." evidence="16" ref="1">
    <original>I</original>
    <variation>F</variation>
    <location>
        <position position="15"/>
    </location>
</feature>
<feature type="sequence conflict" description="In Ref. 1; BAE29360." evidence="16" ref="1">
    <original>N</original>
    <variation>D</variation>
    <location>
        <position position="31"/>
    </location>
</feature>
<feature type="sequence conflict" description="In Ref. 1; BAE29360." evidence="16" ref="1">
    <original>H</original>
    <variation>R</variation>
    <location>
        <position position="36"/>
    </location>
</feature>
<organism>
    <name type="scientific">Mus musculus</name>
    <name type="common">Mouse</name>
    <dbReference type="NCBI Taxonomy" id="10090"/>
    <lineage>
        <taxon>Eukaryota</taxon>
        <taxon>Metazoa</taxon>
        <taxon>Chordata</taxon>
        <taxon>Craniata</taxon>
        <taxon>Vertebrata</taxon>
        <taxon>Euteleostomi</taxon>
        <taxon>Mammalia</taxon>
        <taxon>Eutheria</taxon>
        <taxon>Euarchontoglires</taxon>
        <taxon>Glires</taxon>
        <taxon>Rodentia</taxon>
        <taxon>Myomorpha</taxon>
        <taxon>Muroidea</taxon>
        <taxon>Muridae</taxon>
        <taxon>Murinae</taxon>
        <taxon>Mus</taxon>
        <taxon>Mus</taxon>
    </lineage>
</organism>
<keyword id="KW-0025">Alternative splicing</keyword>
<keyword id="KW-1003">Cell membrane</keyword>
<keyword id="KW-0963">Cytoplasm</keyword>
<keyword id="KW-0967">Endosome</keyword>
<keyword id="KW-0449">Lipoprotein</keyword>
<keyword id="KW-0472">Membrane</keyword>
<keyword id="KW-0479">Metal-binding</keyword>
<keyword id="KW-0519">Myristate</keyword>
<keyword id="KW-0539">Nucleus</keyword>
<keyword id="KW-0597">Phosphoprotein</keyword>
<keyword id="KW-1185">Reference proteome</keyword>
<keyword id="KW-0808">Transferase</keyword>
<keyword id="KW-0832">Ubl conjugation</keyword>
<keyword id="KW-0833">Ubl conjugation pathway</keyword>
<keyword id="KW-0862">Zinc</keyword>
<keyword id="KW-0863">Zinc-finger</keyword>
<sequence length="532" mass="58477">MGSILSRRIAGVEDIDIQANSAYRYPPKSGNYFASHFFMGGEKFDTPHPEGYLFGENMDLNFLGSRPVQFPYVTPAPHEPVKTLRSLVNIRKDSLRLVRYKEDADSPTEDGEKPRVLYSLEFTFDADARVAITIYCQAVEELVNGVAVYSCKNPSLQSETVHYKRGVSQQFSLPSFKIDFSEWKDDELNFDLDRGVFPVVIQAVVDEGDVVEVTGHAHVLLAAFEKHVDGSFSVKPLKQKQIVDRVSYLLQEIYGIENKNNQETKPSDDENSDNSSECVVCLSDLRDTLILPCRHLCLCTSCADTLRYQANNCPICRLPFRALLQIRAVRKKPGALSPISFSPVLAQSVDHDEHSSSDSIPPGYEPISLLEALNGLRAVSPAIPSAPLYEEITYSGISDGLSQASCPLAGLDRIMESGLQKGKTQSKSPDSTLRSPSFPIHEEDEEKLSEDSDAPLPPSGVELVLRESSSPESFGTEEGDEPSLKQGSRVPSIDDVLQDGSPQHHGCSQPVPPADIYLPALGPESCSVGIEE</sequence>
<dbReference type="EC" id="2.3.2.27"/>
<dbReference type="EMBL" id="AK011747">
    <property type="protein sequence ID" value="BAB27816.2"/>
    <property type="molecule type" value="mRNA"/>
</dbReference>
<dbReference type="EMBL" id="AK034100">
    <property type="protein sequence ID" value="BAC28587.1"/>
    <property type="molecule type" value="mRNA"/>
</dbReference>
<dbReference type="EMBL" id="AK088533">
    <property type="protein sequence ID" value="BAC40408.1"/>
    <property type="molecule type" value="mRNA"/>
</dbReference>
<dbReference type="EMBL" id="AK150176">
    <property type="protein sequence ID" value="BAE29360.1"/>
    <property type="molecule type" value="mRNA"/>
</dbReference>
<dbReference type="EMBL" id="AK153407">
    <property type="protein sequence ID" value="BAE31967.1"/>
    <property type="molecule type" value="mRNA"/>
</dbReference>
<dbReference type="EMBL" id="BC046830">
    <property type="protein sequence ID" value="AAH46830.1"/>
    <property type="molecule type" value="mRNA"/>
</dbReference>
<dbReference type="EMBL" id="AK129161">
    <property type="protein sequence ID" value="BAC97971.1"/>
    <property type="molecule type" value="mRNA"/>
</dbReference>
<dbReference type="CCDS" id="CCDS49751.1">
    <molecule id="Q9D074-1"/>
</dbReference>
<dbReference type="CCDS" id="CCDS57016.1">
    <molecule id="Q9D074-2"/>
</dbReference>
<dbReference type="CCDS" id="CCDS88868.1">
    <molecule id="Q9D074-4"/>
</dbReference>
<dbReference type="CCDS" id="CCDS88869.1">
    <molecule id="Q9D074-3"/>
</dbReference>
<dbReference type="RefSeq" id="NP_001239366.1">
    <molecule id="Q9D074-2"/>
    <property type="nucleotide sequence ID" value="NM_001252437.1"/>
</dbReference>
<dbReference type="RefSeq" id="NP_001343990.1">
    <molecule id="Q9D074-3"/>
    <property type="nucleotide sequence ID" value="NM_001357061.1"/>
</dbReference>
<dbReference type="RefSeq" id="NP_001343991.1">
    <molecule id="Q9D074-4"/>
    <property type="nucleotide sequence ID" value="NM_001357062.1"/>
</dbReference>
<dbReference type="RefSeq" id="NP_001365941.1">
    <molecule id="Q9D074-5"/>
    <property type="nucleotide sequence ID" value="NM_001379012.1"/>
</dbReference>
<dbReference type="RefSeq" id="NP_001365944.1">
    <molecule id="Q9D074-1"/>
    <property type="nucleotide sequence ID" value="NM_001379015.1"/>
</dbReference>
<dbReference type="RefSeq" id="NP_083933.1">
    <molecule id="Q9D074-1"/>
    <property type="nucleotide sequence ID" value="NM_029657.4"/>
</dbReference>
<dbReference type="RefSeq" id="XP_006521895.1">
    <property type="nucleotide sequence ID" value="XM_006521832.1"/>
</dbReference>
<dbReference type="RefSeq" id="XP_006521897.1">
    <property type="nucleotide sequence ID" value="XM_006521834.1"/>
</dbReference>
<dbReference type="RefSeq" id="XP_017172376.1">
    <property type="nucleotide sequence ID" value="XM_017316887.1"/>
</dbReference>
<dbReference type="BioGRID" id="201365">
    <property type="interactions" value="6"/>
</dbReference>
<dbReference type="CORUM" id="Q9D074"/>
<dbReference type="FunCoup" id="Q9D074">
    <property type="interactions" value="4899"/>
</dbReference>
<dbReference type="STRING" id="10090.ENSMUSP00000155034"/>
<dbReference type="GlyGen" id="Q9D074">
    <property type="glycosylation" value="3 sites, 1 N-linked glycan (1 site), 1 O-linked glycan (1 site)"/>
</dbReference>
<dbReference type="iPTMnet" id="Q9D074"/>
<dbReference type="PhosphoSitePlus" id="Q9D074"/>
<dbReference type="jPOST" id="Q9D074"/>
<dbReference type="PaxDb" id="10090-ENSMUSP00000023159"/>
<dbReference type="PeptideAtlas" id="Q9D074"/>
<dbReference type="ProteomicsDB" id="293471">
    <molecule id="Q9D074-1"/>
</dbReference>
<dbReference type="ProteomicsDB" id="293472">
    <molecule id="Q9D074-2"/>
</dbReference>
<dbReference type="ProteomicsDB" id="293473">
    <molecule id="Q9D074-3"/>
</dbReference>
<dbReference type="ProteomicsDB" id="293474">
    <molecule id="Q9D074-4"/>
</dbReference>
<dbReference type="ProteomicsDB" id="293475">
    <molecule id="Q9D074-5"/>
</dbReference>
<dbReference type="Pumba" id="Q9D074"/>
<dbReference type="Antibodypedia" id="2013">
    <property type="antibodies" value="270 antibodies from 28 providers"/>
</dbReference>
<dbReference type="DNASU" id="17237"/>
<dbReference type="Ensembl" id="ENSMUST00000023159.10">
    <molecule id="Q9D074-3"/>
    <property type="protein sequence ID" value="ENSMUSP00000023159.10"/>
    <property type="gene ID" value="ENSMUSG00000022517.18"/>
</dbReference>
<dbReference type="Ensembl" id="ENSMUST00000070658.16">
    <molecule id="Q9D074-1"/>
    <property type="protein sequence ID" value="ENSMUSP00000068314.9"/>
    <property type="gene ID" value="ENSMUSG00000022517.18"/>
</dbReference>
<dbReference type="Ensembl" id="ENSMUST00000229038.2">
    <molecule id="Q9D074-2"/>
    <property type="protein sequence ID" value="ENSMUSP00000155034.2"/>
    <property type="gene ID" value="ENSMUSG00000022517.18"/>
</dbReference>
<dbReference type="Ensembl" id="ENSMUST00000230990.2">
    <molecule id="Q9D074-4"/>
    <property type="protein sequence ID" value="ENSMUSP00000155425.2"/>
    <property type="gene ID" value="ENSMUSG00000022517.18"/>
</dbReference>
<dbReference type="GeneID" id="17237"/>
<dbReference type="KEGG" id="mmu:17237"/>
<dbReference type="UCSC" id="uc007yap.2">
    <molecule id="Q9D074-1"/>
    <property type="organism name" value="mouse"/>
</dbReference>
<dbReference type="UCSC" id="uc007yaq.2">
    <molecule id="Q9D074-2"/>
    <property type="organism name" value="mouse"/>
</dbReference>
<dbReference type="AGR" id="MGI:2447670"/>
<dbReference type="CTD" id="23295"/>
<dbReference type="MGI" id="MGI:2447670">
    <property type="gene designation" value="Mgrn1"/>
</dbReference>
<dbReference type="VEuPathDB" id="HostDB:ENSMUSG00000022517"/>
<dbReference type="eggNOG" id="KOG4265">
    <property type="taxonomic scope" value="Eukaryota"/>
</dbReference>
<dbReference type="GeneTree" id="ENSGT00390000009925"/>
<dbReference type="HOGENOM" id="CLU_016631_1_1_1"/>
<dbReference type="InParanoid" id="Q9D074"/>
<dbReference type="OMA" id="YYYKKGA"/>
<dbReference type="PhylomeDB" id="Q9D074"/>
<dbReference type="TreeFam" id="TF314969"/>
<dbReference type="Reactome" id="R-MMU-983168">
    <property type="pathway name" value="Antigen processing: Ubiquitination &amp; Proteasome degradation"/>
</dbReference>
<dbReference type="UniPathway" id="UPA00143"/>
<dbReference type="BioGRID-ORCS" id="17237">
    <property type="hits" value="5 hits in 78 CRISPR screens"/>
</dbReference>
<dbReference type="ChiTaRS" id="Mgrn1">
    <property type="organism name" value="mouse"/>
</dbReference>
<dbReference type="PRO" id="PR:Q9D074"/>
<dbReference type="Proteomes" id="UP000000589">
    <property type="component" value="Chromosome 16"/>
</dbReference>
<dbReference type="RNAct" id="Q9D074">
    <property type="molecule type" value="protein"/>
</dbReference>
<dbReference type="Bgee" id="ENSMUSG00000022517">
    <property type="expression patterns" value="Expressed in interventricular septum and 236 other cell types or tissues"/>
</dbReference>
<dbReference type="GO" id="GO:0005769">
    <property type="term" value="C:early endosome"/>
    <property type="evidence" value="ECO:0007669"/>
    <property type="project" value="UniProtKB-SubCell"/>
</dbReference>
<dbReference type="GO" id="GO:0005783">
    <property type="term" value="C:endoplasmic reticulum"/>
    <property type="evidence" value="ECO:0007669"/>
    <property type="project" value="Ensembl"/>
</dbReference>
<dbReference type="GO" id="GO:0005634">
    <property type="term" value="C:nucleus"/>
    <property type="evidence" value="ECO:0007669"/>
    <property type="project" value="UniProtKB-SubCell"/>
</dbReference>
<dbReference type="GO" id="GO:0005886">
    <property type="term" value="C:plasma membrane"/>
    <property type="evidence" value="ECO:0007669"/>
    <property type="project" value="UniProtKB-SubCell"/>
</dbReference>
<dbReference type="GO" id="GO:0000151">
    <property type="term" value="C:ubiquitin ligase complex"/>
    <property type="evidence" value="ECO:0000314"/>
    <property type="project" value="MGI"/>
</dbReference>
<dbReference type="GO" id="GO:0061630">
    <property type="term" value="F:ubiquitin protein ligase activity"/>
    <property type="evidence" value="ECO:0000314"/>
    <property type="project" value="MGI"/>
</dbReference>
<dbReference type="GO" id="GO:0004842">
    <property type="term" value="F:ubiquitin-protein transferase activity"/>
    <property type="evidence" value="ECO:0000250"/>
    <property type="project" value="UniProtKB"/>
</dbReference>
<dbReference type="GO" id="GO:0008270">
    <property type="term" value="F:zinc ion binding"/>
    <property type="evidence" value="ECO:0007669"/>
    <property type="project" value="UniProtKB-KW"/>
</dbReference>
<dbReference type="GO" id="GO:0008333">
    <property type="term" value="P:endosome to lysosome transport"/>
    <property type="evidence" value="ECO:0007669"/>
    <property type="project" value="Ensembl"/>
</dbReference>
<dbReference type="GO" id="GO:0007507">
    <property type="term" value="P:heart development"/>
    <property type="evidence" value="ECO:0000315"/>
    <property type="project" value="MGI"/>
</dbReference>
<dbReference type="GO" id="GO:0106072">
    <property type="term" value="P:negative regulation of adenylate cyclase-activating G protein-coupled receptor signaling pathway"/>
    <property type="evidence" value="ECO:0000250"/>
    <property type="project" value="UniProtKB"/>
</dbReference>
<dbReference type="GO" id="GO:0045879">
    <property type="term" value="P:negative regulation of smoothened signaling pathway"/>
    <property type="evidence" value="ECO:0000315"/>
    <property type="project" value="UniProtKB"/>
</dbReference>
<dbReference type="GO" id="GO:0006513">
    <property type="term" value="P:protein monoubiquitination"/>
    <property type="evidence" value="ECO:0007669"/>
    <property type="project" value="Ensembl"/>
</dbReference>
<dbReference type="GO" id="GO:0000209">
    <property type="term" value="P:protein polyubiquitination"/>
    <property type="evidence" value="ECO:0000314"/>
    <property type="project" value="MGI"/>
</dbReference>
<dbReference type="GO" id="GO:0016567">
    <property type="term" value="P:protein ubiquitination"/>
    <property type="evidence" value="ECO:0000314"/>
    <property type="project" value="MGI"/>
</dbReference>
<dbReference type="GO" id="GO:0065003">
    <property type="term" value="P:protein-containing complex assembly"/>
    <property type="evidence" value="ECO:0000314"/>
    <property type="project" value="MGI"/>
</dbReference>
<dbReference type="GO" id="GO:0007224">
    <property type="term" value="P:smoothened signaling pathway"/>
    <property type="evidence" value="ECO:0000315"/>
    <property type="project" value="MGI"/>
</dbReference>
<dbReference type="CDD" id="cd16816">
    <property type="entry name" value="mRING-HC-C3HC5_MGRN1"/>
    <property type="match status" value="1"/>
</dbReference>
<dbReference type="FunFam" id="3.30.40.10:FF:000013">
    <property type="entry name" value="E3 ubiquitin-protein ligase MGRN1 isoform 1"/>
    <property type="match status" value="1"/>
</dbReference>
<dbReference type="Gene3D" id="3.30.40.10">
    <property type="entry name" value="Zinc/RING finger domain, C3HC4 (zinc finger)"/>
    <property type="match status" value="1"/>
</dbReference>
<dbReference type="InterPro" id="IPR045194">
    <property type="entry name" value="MGRN1/RNF157-like"/>
</dbReference>
<dbReference type="InterPro" id="IPR001841">
    <property type="entry name" value="Znf_RING"/>
</dbReference>
<dbReference type="InterPro" id="IPR013083">
    <property type="entry name" value="Znf_RING/FYVE/PHD"/>
</dbReference>
<dbReference type="PANTHER" id="PTHR22996:SF2">
    <property type="entry name" value="E3 UBIQUITIN-PROTEIN LIGASE MGRN1"/>
    <property type="match status" value="1"/>
</dbReference>
<dbReference type="PANTHER" id="PTHR22996">
    <property type="entry name" value="MAHOGUNIN"/>
    <property type="match status" value="1"/>
</dbReference>
<dbReference type="Pfam" id="PF13920">
    <property type="entry name" value="zf-C3HC4_3"/>
    <property type="match status" value="1"/>
</dbReference>
<dbReference type="SMART" id="SM00184">
    <property type="entry name" value="RING"/>
    <property type="match status" value="1"/>
</dbReference>
<dbReference type="SUPFAM" id="SSF57850">
    <property type="entry name" value="RING/U-box"/>
    <property type="match status" value="1"/>
</dbReference>
<dbReference type="PROSITE" id="PS50089">
    <property type="entry name" value="ZF_RING_2"/>
    <property type="match status" value="1"/>
</dbReference>
<reference key="1">
    <citation type="journal article" date="2005" name="Science">
        <title>The transcriptional landscape of the mammalian genome.</title>
        <authorList>
            <person name="Carninci P."/>
            <person name="Kasukawa T."/>
            <person name="Katayama S."/>
            <person name="Gough J."/>
            <person name="Frith M.C."/>
            <person name="Maeda N."/>
            <person name="Oyama R."/>
            <person name="Ravasi T."/>
            <person name="Lenhard B."/>
            <person name="Wells C."/>
            <person name="Kodzius R."/>
            <person name="Shimokawa K."/>
            <person name="Bajic V.B."/>
            <person name="Brenner S.E."/>
            <person name="Batalov S."/>
            <person name="Forrest A.R."/>
            <person name="Zavolan M."/>
            <person name="Davis M.J."/>
            <person name="Wilming L.G."/>
            <person name="Aidinis V."/>
            <person name="Allen J.E."/>
            <person name="Ambesi-Impiombato A."/>
            <person name="Apweiler R."/>
            <person name="Aturaliya R.N."/>
            <person name="Bailey T.L."/>
            <person name="Bansal M."/>
            <person name="Baxter L."/>
            <person name="Beisel K.W."/>
            <person name="Bersano T."/>
            <person name="Bono H."/>
            <person name="Chalk A.M."/>
            <person name="Chiu K.P."/>
            <person name="Choudhary V."/>
            <person name="Christoffels A."/>
            <person name="Clutterbuck D.R."/>
            <person name="Crowe M.L."/>
            <person name="Dalla E."/>
            <person name="Dalrymple B.P."/>
            <person name="de Bono B."/>
            <person name="Della Gatta G."/>
            <person name="di Bernardo D."/>
            <person name="Down T."/>
            <person name="Engstrom P."/>
            <person name="Fagiolini M."/>
            <person name="Faulkner G."/>
            <person name="Fletcher C.F."/>
            <person name="Fukushima T."/>
            <person name="Furuno M."/>
            <person name="Futaki S."/>
            <person name="Gariboldi M."/>
            <person name="Georgii-Hemming P."/>
            <person name="Gingeras T.R."/>
            <person name="Gojobori T."/>
            <person name="Green R.E."/>
            <person name="Gustincich S."/>
            <person name="Harbers M."/>
            <person name="Hayashi Y."/>
            <person name="Hensch T.K."/>
            <person name="Hirokawa N."/>
            <person name="Hill D."/>
            <person name="Huminiecki L."/>
            <person name="Iacono M."/>
            <person name="Ikeo K."/>
            <person name="Iwama A."/>
            <person name="Ishikawa T."/>
            <person name="Jakt M."/>
            <person name="Kanapin A."/>
            <person name="Katoh M."/>
            <person name="Kawasawa Y."/>
            <person name="Kelso J."/>
            <person name="Kitamura H."/>
            <person name="Kitano H."/>
            <person name="Kollias G."/>
            <person name="Krishnan S.P."/>
            <person name="Kruger A."/>
            <person name="Kummerfeld S.K."/>
            <person name="Kurochkin I.V."/>
            <person name="Lareau L.F."/>
            <person name="Lazarevic D."/>
            <person name="Lipovich L."/>
            <person name="Liu J."/>
            <person name="Liuni S."/>
            <person name="McWilliam S."/>
            <person name="Madan Babu M."/>
            <person name="Madera M."/>
            <person name="Marchionni L."/>
            <person name="Matsuda H."/>
            <person name="Matsuzawa S."/>
            <person name="Miki H."/>
            <person name="Mignone F."/>
            <person name="Miyake S."/>
            <person name="Morris K."/>
            <person name="Mottagui-Tabar S."/>
            <person name="Mulder N."/>
            <person name="Nakano N."/>
            <person name="Nakauchi H."/>
            <person name="Ng P."/>
            <person name="Nilsson R."/>
            <person name="Nishiguchi S."/>
            <person name="Nishikawa S."/>
            <person name="Nori F."/>
            <person name="Ohara O."/>
            <person name="Okazaki Y."/>
            <person name="Orlando V."/>
            <person name="Pang K.C."/>
            <person name="Pavan W.J."/>
            <person name="Pavesi G."/>
            <person name="Pesole G."/>
            <person name="Petrovsky N."/>
            <person name="Piazza S."/>
            <person name="Reed J."/>
            <person name="Reid J.F."/>
            <person name="Ring B.Z."/>
            <person name="Ringwald M."/>
            <person name="Rost B."/>
            <person name="Ruan Y."/>
            <person name="Salzberg S.L."/>
            <person name="Sandelin A."/>
            <person name="Schneider C."/>
            <person name="Schoenbach C."/>
            <person name="Sekiguchi K."/>
            <person name="Semple C.A."/>
            <person name="Seno S."/>
            <person name="Sessa L."/>
            <person name="Sheng Y."/>
            <person name="Shibata Y."/>
            <person name="Shimada H."/>
            <person name="Shimada K."/>
            <person name="Silva D."/>
            <person name="Sinclair B."/>
            <person name="Sperling S."/>
            <person name="Stupka E."/>
            <person name="Sugiura K."/>
            <person name="Sultana R."/>
            <person name="Takenaka Y."/>
            <person name="Taki K."/>
            <person name="Tammoja K."/>
            <person name="Tan S.L."/>
            <person name="Tang S."/>
            <person name="Taylor M.S."/>
            <person name="Tegner J."/>
            <person name="Teichmann S.A."/>
            <person name="Ueda H.R."/>
            <person name="van Nimwegen E."/>
            <person name="Verardo R."/>
            <person name="Wei C.L."/>
            <person name="Yagi K."/>
            <person name="Yamanishi H."/>
            <person name="Zabarovsky E."/>
            <person name="Zhu S."/>
            <person name="Zimmer A."/>
            <person name="Hide W."/>
            <person name="Bult C."/>
            <person name="Grimmond S.M."/>
            <person name="Teasdale R.D."/>
            <person name="Liu E.T."/>
            <person name="Brusic V."/>
            <person name="Quackenbush J."/>
            <person name="Wahlestedt C."/>
            <person name="Mattick J.S."/>
            <person name="Hume D.A."/>
            <person name="Kai C."/>
            <person name="Sasaki D."/>
            <person name="Tomaru Y."/>
            <person name="Fukuda S."/>
            <person name="Kanamori-Katayama M."/>
            <person name="Suzuki M."/>
            <person name="Aoki J."/>
            <person name="Arakawa T."/>
            <person name="Iida J."/>
            <person name="Imamura K."/>
            <person name="Itoh M."/>
            <person name="Kato T."/>
            <person name="Kawaji H."/>
            <person name="Kawagashira N."/>
            <person name="Kawashima T."/>
            <person name="Kojima M."/>
            <person name="Kondo S."/>
            <person name="Konno H."/>
            <person name="Nakano K."/>
            <person name="Ninomiya N."/>
            <person name="Nishio T."/>
            <person name="Okada M."/>
            <person name="Plessy C."/>
            <person name="Shibata K."/>
            <person name="Shiraki T."/>
            <person name="Suzuki S."/>
            <person name="Tagami M."/>
            <person name="Waki K."/>
            <person name="Watahiki A."/>
            <person name="Okamura-Oho Y."/>
            <person name="Suzuki H."/>
            <person name="Kawai J."/>
            <person name="Hayashizaki Y."/>
        </authorList>
    </citation>
    <scope>NUCLEOTIDE SEQUENCE [LARGE SCALE MRNA] (ISOFORMS 1 AND 2)</scope>
    <scope>NUCLEOTIDE SEQUENCE [LARGE SCALE MRNA] OF 318-532 (ISOFORM 4)</scope>
    <source>
        <strain>C57BL/6J</strain>
        <strain>NOD</strain>
        <tissue>Bone marrow</tissue>
        <tissue>Diencephalon</tissue>
        <tissue>Thymus</tissue>
    </source>
</reference>
<reference key="2">
    <citation type="journal article" date="2004" name="Genome Res.">
        <title>The status, quality, and expansion of the NIH full-length cDNA project: the Mammalian Gene Collection (MGC).</title>
        <authorList>
            <consortium name="The MGC Project Team"/>
        </authorList>
    </citation>
    <scope>NUCLEOTIDE SEQUENCE [LARGE SCALE MRNA] (ISOFORM 1)</scope>
    <source>
        <strain>C57BL/6J</strain>
        <tissue>Brain</tissue>
    </source>
</reference>
<reference key="3">
    <citation type="journal article" date="2003" name="DNA Res.">
        <title>Prediction of the coding sequences of mouse homologues of KIAA gene: III. The complete nucleotide sequences of 500 mouse KIAA-homologous cDNAs identified by screening of terminal sequences of cDNA clones randomly sampled from size-fractionated libraries.</title>
        <authorList>
            <person name="Okazaki N."/>
            <person name="Kikuno R."/>
            <person name="Ohara R."/>
            <person name="Inamoto S."/>
            <person name="Koseki H."/>
            <person name="Hiraoka S."/>
            <person name="Saga Y."/>
            <person name="Nagase T."/>
            <person name="Ohara O."/>
            <person name="Koga H."/>
        </authorList>
    </citation>
    <scope>NUCLEOTIDE SEQUENCE [LARGE SCALE MRNA] OF 102-532 (ISOFORM 3)</scope>
    <source>
        <tissue>Embryonic tail</tissue>
    </source>
</reference>
<reference key="4">
    <citation type="journal article" date="2002" name="J. Clin. Invest.">
        <title>The mouse mahoganoid coat color mutation disrupts a novel C3HC4 RING domain protein.</title>
        <authorList>
            <person name="Phan L.K."/>
            <person name="Lin F."/>
            <person name="LeDuc C.A."/>
            <person name="Chung W.K."/>
            <person name="Leibel R.L."/>
        </authorList>
    </citation>
    <scope>TISSUE SPECIFICITY</scope>
</reference>
<reference key="5">
    <citation type="journal article" date="2003" name="Science">
        <title>Spongiform degeneration in mahoganoid mutant mice.</title>
        <authorList>
            <person name="He L."/>
            <person name="Lu X.-Y."/>
            <person name="Jolly A.F."/>
            <person name="Eldridge A.G."/>
            <person name="Watson S.J."/>
            <person name="Jackson P.K."/>
            <person name="Barsh G.S."/>
            <person name="Gunn T.M."/>
        </authorList>
    </citation>
    <scope>FUNCTION</scope>
    <scope>DISRUPTION PHENOTYPE</scope>
    <scope>UBIQUITINATION</scope>
    <scope>TISSUE SPECIFICITY</scope>
</reference>
<reference key="6">
    <citation type="journal article" date="2005" name="Nat. Biotechnol.">
        <title>Immunoaffinity profiling of tyrosine phosphorylation in cancer cells.</title>
        <authorList>
            <person name="Rush J."/>
            <person name="Moritz A."/>
            <person name="Lee K.A."/>
            <person name="Guo A."/>
            <person name="Goss V.L."/>
            <person name="Spek E.J."/>
            <person name="Zhang H."/>
            <person name="Zha X.-M."/>
            <person name="Polakiewicz R.D."/>
            <person name="Comb M.J."/>
        </authorList>
    </citation>
    <scope>PHOSPHORYLATION [LARGE SCALE ANALYSIS] AT TYR-389</scope>
    <scope>IDENTIFICATION BY MASS SPECTROMETRY [LARGE SCALE ANALYSIS]</scope>
</reference>
<reference key="7">
    <citation type="journal article" date="2006" name="Dev. Dyn.">
        <title>Mice with mutations in Mahogunin ring finger-1 (Mgrn1) exhibit abnormal patterning of the left-right axis.</title>
        <authorList>
            <person name="Cota C.D."/>
            <person name="Bagher P."/>
            <person name="Pelc P."/>
            <person name="Smith C.O."/>
            <person name="Bodner C.R."/>
            <person name="Gunn T.M."/>
        </authorList>
    </citation>
    <scope>DEVELOPMENTAL STAGE</scope>
    <scope>DISRUPTION PHENOTYPE</scope>
</reference>
<reference key="8">
    <citation type="journal article" date="2006" name="Pigment Cell Res.">
        <title>Characterization of Mahogunin Ring Finger-1 expression in mice.</title>
        <authorList>
            <person name="Bagher P."/>
            <person name="Jiao J."/>
            <person name="Owen Smith C."/>
            <person name="Cota C.D."/>
            <person name="Gunn T.M."/>
        </authorList>
    </citation>
    <scope>ALTERNATIVE SPLICING</scope>
    <scope>TISSUE SPECIFICITY</scope>
</reference>
<reference key="9">
    <citation type="journal article" date="2007" name="Neurobiol. Aging">
        <title>Mitochondrial dysfunction precedes neurodegeneration in mahogunin (Mgrn1) mutant mice.</title>
        <authorList>
            <person name="Sun K."/>
            <person name="Johnson B.S."/>
            <person name="Gunn T.M."/>
        </authorList>
    </citation>
    <scope>DISRUPTION PHENOTYPE</scope>
</reference>
<reference key="10">
    <citation type="journal article" date="2009" name="Biochim. Biophys. Acta">
        <title>Abnormal regulation of TSG101 in mice with spongiform neurodegeneration.</title>
        <authorList>
            <person name="Jiao J."/>
            <person name="Sun K."/>
            <person name="Walker W.P."/>
            <person name="Bagher P."/>
            <person name="Cota C.D."/>
            <person name="Gunn T.M."/>
        </authorList>
    </citation>
    <scope>FUNCTION</scope>
    <scope>INTERACTION WITH TSG101</scope>
    <scope>DISRUPTION PHENOTYPE</scope>
    <scope>MUTAGENESIS OF 278-CYS--CYS-281 AND 384-PRO--PRO-387</scope>
</reference>
<reference key="11">
    <citation type="journal article" date="2009" name="Cell">
        <title>Functional depletion of mahogunin by cytosolically exposed prion protein contributes to neurodegeneration.</title>
        <authorList>
            <person name="Chakrabarti O."/>
            <person name="Hegde R.S."/>
        </authorList>
    </citation>
    <scope>INTERACTION WITH PRNP</scope>
    <scope>TISSUE SPECIFICITY</scope>
    <scope>SUBCELLULAR LOCATION</scope>
</reference>
<reference key="12">
    <citation type="journal article" date="2009" name="Genesis">
        <title>Transgenic analysis of the physiological functions of Mahogunin Ring Finger-1 isoforms.</title>
        <authorList>
            <person name="Jiao J."/>
            <person name="Kim H.Y."/>
            <person name="Liu R.R."/>
            <person name="Hogan C.A."/>
            <person name="Sun K."/>
            <person name="Tam L.M."/>
            <person name="Gunn T.M."/>
        </authorList>
    </citation>
    <scope>ALTERNATIVE SPLICING</scope>
    <scope>SUBCELLULAR LOCATION</scope>
    <scope>DISRUPTION PHENOTYPE</scope>
</reference>
<reference key="13">
    <citation type="journal article" date="2009" name="Immunity">
        <title>The phagosomal proteome in interferon-gamma-activated macrophages.</title>
        <authorList>
            <person name="Trost M."/>
            <person name="English L."/>
            <person name="Lemieux S."/>
            <person name="Courcelles M."/>
            <person name="Desjardins M."/>
            <person name="Thibault P."/>
        </authorList>
    </citation>
    <scope>PHOSPHORYLATION [LARGE SCALE ANALYSIS] AT SER-428</scope>
    <scope>IDENTIFICATION BY MASS SPECTROMETRY [LARGE SCALE ANALYSIS]</scope>
</reference>
<reference key="14">
    <citation type="journal article" date="2010" name="Cell">
        <title>A tissue-specific atlas of mouse protein phosphorylation and expression.</title>
        <authorList>
            <person name="Huttlin E.L."/>
            <person name="Jedrychowski M.P."/>
            <person name="Elias J.E."/>
            <person name="Goswami T."/>
            <person name="Rad R."/>
            <person name="Beausoleil S.A."/>
            <person name="Villen J."/>
            <person name="Haas W."/>
            <person name="Sowa M.E."/>
            <person name="Gygi S.P."/>
        </authorList>
    </citation>
    <scope>PHOSPHORYLATION [LARGE SCALE ANALYSIS] AT SER-428; SER-449 AND SER-452</scope>
    <scope>IDENTIFICATION BY MASS SPECTROMETRY [LARGE SCALE ANALYSIS]</scope>
    <source>
        <tissue>Brain</tissue>
        <tissue>Testis</tissue>
    </source>
</reference>
<reference key="15">
    <citation type="journal article" date="2018" name="Dev. Cell">
        <title>CRISPR screens uncover genes that regulate target cell sensitivity to the morphogen sonic hedgehog.</title>
        <authorList>
            <person name="Pusapati G.V."/>
            <person name="Kong J.H."/>
            <person name="Patel B.B."/>
            <person name="Krishnan A."/>
            <person name="Sagner A."/>
            <person name="Kinnebrew M."/>
            <person name="Briscoe J."/>
            <person name="Aravind L."/>
            <person name="Rohatgi R."/>
        </authorList>
    </citation>
    <scope>FUNCTION</scope>
</reference>
<gene>
    <name type="primary">Mgrn1</name>
    <name type="synonym">Kiaa0544</name>
</gene>
<accession>Q9D074</accession>
<accession>Q3U5V9</accession>
<accession>Q3UDA1</accession>
<accession>Q6ZQ97</accession>
<accession>Q8BZM9</accession>
<evidence type="ECO:0000250" key="1"/>
<evidence type="ECO:0000250" key="2">
    <source>
        <dbReference type="UniProtKB" id="O60291"/>
    </source>
</evidence>
<evidence type="ECO:0000255" key="3">
    <source>
        <dbReference type="PROSITE-ProRule" id="PRU00175"/>
    </source>
</evidence>
<evidence type="ECO:0000256" key="4">
    <source>
        <dbReference type="SAM" id="MobiDB-lite"/>
    </source>
</evidence>
<evidence type="ECO:0000269" key="5">
    <source>
    </source>
</evidence>
<evidence type="ECO:0000269" key="6">
    <source>
    </source>
</evidence>
<evidence type="ECO:0000269" key="7">
    <source>
    </source>
</evidence>
<evidence type="ECO:0000269" key="8">
    <source>
    </source>
</evidence>
<evidence type="ECO:0000269" key="9">
    <source>
    </source>
</evidence>
<evidence type="ECO:0000269" key="10">
    <source>
    </source>
</evidence>
<evidence type="ECO:0000269" key="11">
    <source>
    </source>
</evidence>
<evidence type="ECO:0000269" key="12">
    <source>
    </source>
</evidence>
<evidence type="ECO:0000269" key="13">
    <source>
    </source>
</evidence>
<evidence type="ECO:0000303" key="14">
    <source>
    </source>
</evidence>
<evidence type="ECO:0000303" key="15">
    <source>
    </source>
</evidence>
<evidence type="ECO:0000305" key="16"/>
<evidence type="ECO:0007744" key="17">
    <source>
    </source>
</evidence>
<evidence type="ECO:0007744" key="18">
    <source>
    </source>
</evidence>
<evidence type="ECO:0007744" key="19">
    <source>
    </source>
</evidence>
<name>MGRN1_MOUSE</name>
<proteinExistence type="evidence at protein level"/>